<reference key="1">
    <citation type="journal article" date="2008" name="Genome Res.">
        <title>Chlamydia trachomatis: genome sequence analysis of lymphogranuloma venereum isolates.</title>
        <authorList>
            <person name="Thomson N.R."/>
            <person name="Holden M.T.G."/>
            <person name="Carder C."/>
            <person name="Lennard N."/>
            <person name="Lockey S.J."/>
            <person name="Marsh P."/>
            <person name="Skipp P."/>
            <person name="O'Connor C.D."/>
            <person name="Goodhead I."/>
            <person name="Norbertzcak H."/>
            <person name="Harris B."/>
            <person name="Ormond D."/>
            <person name="Rance R."/>
            <person name="Quail M.A."/>
            <person name="Parkhill J."/>
            <person name="Stephens R.S."/>
            <person name="Clarke I.N."/>
        </authorList>
    </citation>
    <scope>NUCLEOTIDE SEQUENCE [LARGE SCALE GENOMIC DNA]</scope>
    <source>
        <strain>ATCC VR-902B / DSM 19102 / 434/Bu</strain>
    </source>
</reference>
<gene>
    <name evidence="1" type="primary">obg</name>
    <name type="ordered locus">CTL0675</name>
</gene>
<evidence type="ECO:0000255" key="1">
    <source>
        <dbReference type="HAMAP-Rule" id="MF_01454"/>
    </source>
</evidence>
<evidence type="ECO:0000255" key="2">
    <source>
        <dbReference type="PROSITE-ProRule" id="PRU01231"/>
    </source>
</evidence>
<accession>B0B7Y8</accession>
<organism>
    <name type="scientific">Chlamydia trachomatis serovar L2 (strain ATCC VR-902B / DSM 19102 / 434/Bu)</name>
    <dbReference type="NCBI Taxonomy" id="471472"/>
    <lineage>
        <taxon>Bacteria</taxon>
        <taxon>Pseudomonadati</taxon>
        <taxon>Chlamydiota</taxon>
        <taxon>Chlamydiia</taxon>
        <taxon>Chlamydiales</taxon>
        <taxon>Chlamydiaceae</taxon>
        <taxon>Chlamydia/Chlamydophila group</taxon>
        <taxon>Chlamydia</taxon>
    </lineage>
</organism>
<proteinExistence type="inferred from homology"/>
<keyword id="KW-0963">Cytoplasm</keyword>
<keyword id="KW-0342">GTP-binding</keyword>
<keyword id="KW-0378">Hydrolase</keyword>
<keyword id="KW-0460">Magnesium</keyword>
<keyword id="KW-0479">Metal-binding</keyword>
<keyword id="KW-0547">Nucleotide-binding</keyword>
<comment type="function">
    <text evidence="1">An essential GTPase which binds GTP, GDP and possibly (p)ppGpp with moderate affinity, with high nucleotide exchange rates and a fairly low GTP hydrolysis rate. Plays a role in control of the cell cycle, stress response, ribosome biogenesis and in those bacteria that undergo differentiation, in morphogenesis control.</text>
</comment>
<comment type="cofactor">
    <cofactor evidence="1">
        <name>Mg(2+)</name>
        <dbReference type="ChEBI" id="CHEBI:18420"/>
    </cofactor>
</comment>
<comment type="subunit">
    <text evidence="1">Monomer.</text>
</comment>
<comment type="subcellular location">
    <subcellularLocation>
        <location evidence="1">Cytoplasm</location>
    </subcellularLocation>
</comment>
<comment type="similarity">
    <text evidence="1">Belongs to the TRAFAC class OBG-HflX-like GTPase superfamily. OBG GTPase family.</text>
</comment>
<name>OBG_CHLT2</name>
<dbReference type="EC" id="3.6.5.-" evidence="1"/>
<dbReference type="EMBL" id="AM884176">
    <property type="protein sequence ID" value="CAP04114.1"/>
    <property type="molecule type" value="Genomic_DNA"/>
</dbReference>
<dbReference type="RefSeq" id="YP_001654747.1">
    <property type="nucleotide sequence ID" value="NC_010287.1"/>
</dbReference>
<dbReference type="SMR" id="B0B7Y8"/>
<dbReference type="KEGG" id="ctb:CTL0675"/>
<dbReference type="PATRIC" id="fig|471472.4.peg.725"/>
<dbReference type="HOGENOM" id="CLU_011747_2_3_0"/>
<dbReference type="Proteomes" id="UP001154402">
    <property type="component" value="Chromosome"/>
</dbReference>
<dbReference type="GO" id="GO:0005737">
    <property type="term" value="C:cytoplasm"/>
    <property type="evidence" value="ECO:0007669"/>
    <property type="project" value="UniProtKB-SubCell"/>
</dbReference>
<dbReference type="GO" id="GO:0005525">
    <property type="term" value="F:GTP binding"/>
    <property type="evidence" value="ECO:0007669"/>
    <property type="project" value="UniProtKB-UniRule"/>
</dbReference>
<dbReference type="GO" id="GO:0003924">
    <property type="term" value="F:GTPase activity"/>
    <property type="evidence" value="ECO:0007669"/>
    <property type="project" value="UniProtKB-UniRule"/>
</dbReference>
<dbReference type="GO" id="GO:0000287">
    <property type="term" value="F:magnesium ion binding"/>
    <property type="evidence" value="ECO:0007669"/>
    <property type="project" value="InterPro"/>
</dbReference>
<dbReference type="GO" id="GO:0042254">
    <property type="term" value="P:ribosome biogenesis"/>
    <property type="evidence" value="ECO:0007669"/>
    <property type="project" value="UniProtKB-UniRule"/>
</dbReference>
<dbReference type="CDD" id="cd01898">
    <property type="entry name" value="Obg"/>
    <property type="match status" value="1"/>
</dbReference>
<dbReference type="FunFam" id="2.70.210.12:FF:000001">
    <property type="entry name" value="GTPase Obg"/>
    <property type="match status" value="1"/>
</dbReference>
<dbReference type="Gene3D" id="2.70.210.12">
    <property type="entry name" value="GTP1/OBG domain"/>
    <property type="match status" value="1"/>
</dbReference>
<dbReference type="Gene3D" id="3.40.50.300">
    <property type="entry name" value="P-loop containing nucleotide triphosphate hydrolases"/>
    <property type="match status" value="1"/>
</dbReference>
<dbReference type="HAMAP" id="MF_01454">
    <property type="entry name" value="GTPase_Obg"/>
    <property type="match status" value="1"/>
</dbReference>
<dbReference type="InterPro" id="IPR031167">
    <property type="entry name" value="G_OBG"/>
</dbReference>
<dbReference type="InterPro" id="IPR006073">
    <property type="entry name" value="GTP-bd"/>
</dbReference>
<dbReference type="InterPro" id="IPR014100">
    <property type="entry name" value="GTP-bd_Obg/CgtA"/>
</dbReference>
<dbReference type="InterPro" id="IPR006169">
    <property type="entry name" value="GTP1_OBG_dom"/>
</dbReference>
<dbReference type="InterPro" id="IPR036726">
    <property type="entry name" value="GTP1_OBG_dom_sf"/>
</dbReference>
<dbReference type="InterPro" id="IPR045086">
    <property type="entry name" value="OBG_GTPase"/>
</dbReference>
<dbReference type="InterPro" id="IPR027417">
    <property type="entry name" value="P-loop_NTPase"/>
</dbReference>
<dbReference type="InterPro" id="IPR005225">
    <property type="entry name" value="Small_GTP-bd"/>
</dbReference>
<dbReference type="NCBIfam" id="TIGR02729">
    <property type="entry name" value="Obg_CgtA"/>
    <property type="match status" value="1"/>
</dbReference>
<dbReference type="NCBIfam" id="NF008955">
    <property type="entry name" value="PRK12297.1"/>
    <property type="match status" value="1"/>
</dbReference>
<dbReference type="NCBIfam" id="NF008956">
    <property type="entry name" value="PRK12299.1"/>
    <property type="match status" value="1"/>
</dbReference>
<dbReference type="NCBIfam" id="TIGR00231">
    <property type="entry name" value="small_GTP"/>
    <property type="match status" value="1"/>
</dbReference>
<dbReference type="PANTHER" id="PTHR11702">
    <property type="entry name" value="DEVELOPMENTALLY REGULATED GTP-BINDING PROTEIN-RELATED"/>
    <property type="match status" value="1"/>
</dbReference>
<dbReference type="PANTHER" id="PTHR11702:SF31">
    <property type="entry name" value="MITOCHONDRIAL RIBOSOME-ASSOCIATED GTPASE 2"/>
    <property type="match status" value="1"/>
</dbReference>
<dbReference type="Pfam" id="PF01018">
    <property type="entry name" value="GTP1_OBG"/>
    <property type="match status" value="1"/>
</dbReference>
<dbReference type="Pfam" id="PF01926">
    <property type="entry name" value="MMR_HSR1"/>
    <property type="match status" value="1"/>
</dbReference>
<dbReference type="PIRSF" id="PIRSF002401">
    <property type="entry name" value="GTP_bd_Obg/CgtA"/>
    <property type="match status" value="1"/>
</dbReference>
<dbReference type="PRINTS" id="PR00326">
    <property type="entry name" value="GTP1OBG"/>
</dbReference>
<dbReference type="SUPFAM" id="SSF82051">
    <property type="entry name" value="Obg GTP-binding protein N-terminal domain"/>
    <property type="match status" value="1"/>
</dbReference>
<dbReference type="SUPFAM" id="SSF52540">
    <property type="entry name" value="P-loop containing nucleoside triphosphate hydrolases"/>
    <property type="match status" value="1"/>
</dbReference>
<dbReference type="PROSITE" id="PS51710">
    <property type="entry name" value="G_OBG"/>
    <property type="match status" value="1"/>
</dbReference>
<dbReference type="PROSITE" id="PS51883">
    <property type="entry name" value="OBG"/>
    <property type="match status" value="1"/>
</dbReference>
<sequence length="335" mass="36871">MFVDQITLELRAGKGGNGVVAWRKEKYLPKGGPYGGNGGNGGSILIETVTNMYSFEEYRNLRFLKADDGQAGASNNRTGRNGKDLVLKVPEGTLLRDAATGELIHDFTKDGERIVVCQGGRGGKGNVFFKTSTNRAPTKATPGKPGEIRLVELELKLIADIGLVGFPNAGKSTLFNTLARTEVKVGAYPFTTLHPSLGLVHQEGMLYQKTWIMADIPGIIEGASQNRGLGLDFLRHIERTRLLLFVIDISGIERHSPEQDLKILMGELLAYKEELKDKDMVIALNKIDQLLPDEREERVALLKQQFPDQEFILLSGLTGEGVDALYDLFKSKLSE</sequence>
<feature type="chain" id="PRO_0000385817" description="GTPase Obg">
    <location>
        <begin position="1"/>
        <end position="335"/>
    </location>
</feature>
<feature type="domain" description="Obg" evidence="2">
    <location>
        <begin position="1"/>
        <end position="158"/>
    </location>
</feature>
<feature type="domain" description="OBG-type G" evidence="1">
    <location>
        <begin position="159"/>
        <end position="334"/>
    </location>
</feature>
<feature type="binding site" evidence="1">
    <location>
        <begin position="165"/>
        <end position="172"/>
    </location>
    <ligand>
        <name>GTP</name>
        <dbReference type="ChEBI" id="CHEBI:37565"/>
    </ligand>
</feature>
<feature type="binding site" evidence="1">
    <location>
        <position position="172"/>
    </location>
    <ligand>
        <name>Mg(2+)</name>
        <dbReference type="ChEBI" id="CHEBI:18420"/>
    </ligand>
</feature>
<feature type="binding site" evidence="1">
    <location>
        <begin position="190"/>
        <end position="194"/>
    </location>
    <ligand>
        <name>GTP</name>
        <dbReference type="ChEBI" id="CHEBI:37565"/>
    </ligand>
</feature>
<feature type="binding site" evidence="1">
    <location>
        <position position="192"/>
    </location>
    <ligand>
        <name>Mg(2+)</name>
        <dbReference type="ChEBI" id="CHEBI:18420"/>
    </ligand>
</feature>
<feature type="binding site" evidence="1">
    <location>
        <begin position="215"/>
        <end position="218"/>
    </location>
    <ligand>
        <name>GTP</name>
        <dbReference type="ChEBI" id="CHEBI:37565"/>
    </ligand>
</feature>
<feature type="binding site" evidence="1">
    <location>
        <begin position="285"/>
        <end position="288"/>
    </location>
    <ligand>
        <name>GTP</name>
        <dbReference type="ChEBI" id="CHEBI:37565"/>
    </ligand>
</feature>
<feature type="binding site" evidence="1">
    <location>
        <begin position="315"/>
        <end position="317"/>
    </location>
    <ligand>
        <name>GTP</name>
        <dbReference type="ChEBI" id="CHEBI:37565"/>
    </ligand>
</feature>
<protein>
    <recommendedName>
        <fullName evidence="1">GTPase Obg</fullName>
        <ecNumber evidence="1">3.6.5.-</ecNumber>
    </recommendedName>
    <alternativeName>
        <fullName evidence="1">GTP-binding protein Obg</fullName>
    </alternativeName>
</protein>